<proteinExistence type="predicted"/>
<accession>P25130</accession>
<comment type="function">
    <text>May play a role in phage assembly.</text>
</comment>
<comment type="subcellular location">
    <subcellularLocation>
        <location evidence="2">Host membrane</location>
        <topology evidence="2">Single-pass membrane protein</topology>
    </subcellularLocation>
</comment>
<reference key="1">
    <citation type="journal article" date="1991" name="J. Mol. Biol.">
        <title>DNA sequence of the filamentous bacteriophage Pf1.</title>
        <authorList>
            <person name="Hill D.F."/>
            <person name="Short N.J."/>
            <person name="Perham R.N."/>
            <person name="Petersen G.B."/>
        </authorList>
    </citation>
    <scope>NUCLEOTIDE SEQUENCE [GENOMIC DNA]</scope>
    <source>
        <strain>ATCC 25102-B1 / pf</strain>
    </source>
</reference>
<protein>
    <recommendedName>
        <fullName>Uncharacterized protein ORF430</fullName>
        <shortName>ORF430</shortName>
    </recommendedName>
</protein>
<organism>
    <name type="scientific">Pseudomonas phage Pf1</name>
    <name type="common">Bacteriophage Pf1</name>
    <dbReference type="NCBI Taxonomy" id="2011081"/>
    <lineage>
        <taxon>Viruses</taxon>
        <taxon>Monodnaviria</taxon>
        <taxon>Loebvirae</taxon>
        <taxon>Hofneiviricota</taxon>
        <taxon>Faserviricetes</taxon>
        <taxon>Tubulavirales</taxon>
        <taxon>Inoviridae</taxon>
        <taxon>Primolicivirus</taxon>
    </lineage>
</organism>
<feature type="chain" id="PRO_0000098216" description="Uncharacterized protein ORF430">
    <location>
        <begin position="1"/>
        <end position="430"/>
    </location>
</feature>
<feature type="transmembrane region" description="Helical" evidence="1">
    <location>
        <begin position="207"/>
        <end position="223"/>
    </location>
</feature>
<evidence type="ECO:0000255" key="1"/>
<evidence type="ECO:0000305" key="2"/>
<sequence length="430" mass="49188">MKTPIHPTRLVLEENGDFHKSPKGMLFMDPLNGQFTDLSGVRILRCGVDTVRQLYNGKLRPEVMALFDLSVDVVEFAGYEWSKGRIGRDSGYQYRLQNAEMGLILLIKNHNIKVDTIGSHLKIEVSPHAIDGADPRILQGVLDDLAAAVLSHCETNQAAVHIALDVQGWTPPADLVDRMHCRSRRVRQISGIERIEFDGNASVYGRGETYMFGSANGLQLSIYNKTLQARATDKLDYWESVWATLNGDPFGDGDPAYNPLETVWRIEFRYHHSIVQQFSEGSRMASGEVIGCRTYEGLCPHLQGLWNYACEAFRVLSREGMYDAFWSLISLDARVQVECDPLIERTEYRRYYKTAKGFSGRNCEMFLGQFVSLIARERVPAKKAIESARKLEFWHVIEDHYLAKGWTRRDLERHIHKLMCDRYLRKGYAI</sequence>
<organismHost>
    <name type="scientific">Pseudomonas aeruginosa</name>
    <dbReference type="NCBI Taxonomy" id="287"/>
</organismHost>
<name>VG430_BPPF1</name>
<keyword id="KW-1043">Host membrane</keyword>
<keyword id="KW-0472">Membrane</keyword>
<keyword id="KW-1185">Reference proteome</keyword>
<keyword id="KW-0812">Transmembrane</keyword>
<keyword id="KW-1133">Transmembrane helix</keyword>
<dbReference type="EMBL" id="X52107">
    <property type="protein sequence ID" value="CAA36335.1"/>
    <property type="molecule type" value="Genomic_DNA"/>
</dbReference>
<dbReference type="PIR" id="S15147">
    <property type="entry name" value="S15147"/>
</dbReference>
<dbReference type="RefSeq" id="NP_039607.1">
    <property type="nucleotide sequence ID" value="NC_001331.1"/>
</dbReference>
<dbReference type="GeneID" id="1260708"/>
<dbReference type="KEGG" id="vg:1260708"/>
<dbReference type="Proteomes" id="UP000002121">
    <property type="component" value="Genome"/>
</dbReference>
<dbReference type="GO" id="GO:0033644">
    <property type="term" value="C:host cell membrane"/>
    <property type="evidence" value="ECO:0007669"/>
    <property type="project" value="UniProtKB-SubCell"/>
</dbReference>
<dbReference type="GO" id="GO:0016020">
    <property type="term" value="C:membrane"/>
    <property type="evidence" value="ECO:0007669"/>
    <property type="project" value="UniProtKB-KW"/>
</dbReference>